<name>OCTC_RAT</name>
<accession>P11466</accession>
<accession>P48033</accession>
<proteinExistence type="evidence at protein level"/>
<organism>
    <name type="scientific">Rattus norvegicus</name>
    <name type="common">Rat</name>
    <dbReference type="NCBI Taxonomy" id="10116"/>
    <lineage>
        <taxon>Eukaryota</taxon>
        <taxon>Metazoa</taxon>
        <taxon>Chordata</taxon>
        <taxon>Craniata</taxon>
        <taxon>Vertebrata</taxon>
        <taxon>Euteleostomi</taxon>
        <taxon>Mammalia</taxon>
        <taxon>Eutheria</taxon>
        <taxon>Euarchontoglires</taxon>
        <taxon>Glires</taxon>
        <taxon>Rodentia</taxon>
        <taxon>Myomorpha</taxon>
        <taxon>Muroidea</taxon>
        <taxon>Muridae</taxon>
        <taxon>Murinae</taxon>
        <taxon>Rattus</taxon>
    </lineage>
</organism>
<gene>
    <name type="primary">Crot</name>
    <name type="synonym">Cot</name>
</gene>
<evidence type="ECO:0000250" key="1"/>
<evidence type="ECO:0000250" key="2">
    <source>
        <dbReference type="UniProtKB" id="Q9DC50"/>
    </source>
</evidence>
<evidence type="ECO:0000250" key="3">
    <source>
        <dbReference type="UniProtKB" id="Q9UKG9"/>
    </source>
</evidence>
<evidence type="ECO:0000255" key="4"/>
<evidence type="ECO:0000269" key="5">
    <source>
    </source>
</evidence>
<evidence type="ECO:0000269" key="6">
    <source>
    </source>
</evidence>
<evidence type="ECO:0000305" key="7"/>
<feature type="chain" id="PRO_0000210171" description="Peroxisomal carnitine O-octanoyltransferase">
    <location>
        <begin position="1"/>
        <end position="612"/>
    </location>
</feature>
<feature type="short sequence motif" description="Microbody targeting signal" evidence="4">
    <location>
        <begin position="610"/>
        <end position="612"/>
    </location>
</feature>
<feature type="active site" description="Proton acceptor" evidence="1">
    <location>
        <position position="327"/>
    </location>
</feature>
<feature type="binding site" evidence="1">
    <location>
        <position position="406"/>
    </location>
    <ligand>
        <name>CoA</name>
        <dbReference type="ChEBI" id="CHEBI:57287"/>
    </ligand>
</feature>
<feature type="binding site" evidence="1">
    <location>
        <begin position="410"/>
        <end position="417"/>
    </location>
    <ligand>
        <name>CoA</name>
        <dbReference type="ChEBI" id="CHEBI:57287"/>
    </ligand>
</feature>
<feature type="binding site" evidence="1">
    <location>
        <position position="439"/>
    </location>
    <ligand>
        <name>(R)-carnitine</name>
        <dbReference type="ChEBI" id="CHEBI:16347"/>
    </ligand>
</feature>
<feature type="binding site" evidence="1">
    <location>
        <position position="441"/>
    </location>
    <ligand>
        <name>(R)-carnitine</name>
        <dbReference type="ChEBI" id="CHEBI:16347"/>
    </ligand>
</feature>
<feature type="binding site" evidence="1">
    <location>
        <position position="452"/>
    </location>
    <ligand>
        <name>(R)-carnitine</name>
        <dbReference type="ChEBI" id="CHEBI:16347"/>
    </ligand>
</feature>
<feature type="modified residue" description="N-acetylmethionine" evidence="3">
    <location>
        <position position="1"/>
    </location>
</feature>
<feature type="modified residue" description="N6-succinyllysine" evidence="2">
    <location>
        <position position="40"/>
    </location>
</feature>
<feature type="modified residue" description="N6-succinyllysine" evidence="2">
    <location>
        <position position="57"/>
    </location>
</feature>
<feature type="modified residue" description="N6-acetyllysine; alternate" evidence="2">
    <location>
        <position position="406"/>
    </location>
</feature>
<feature type="modified residue" description="N6-succinyllysine; alternate" evidence="2">
    <location>
        <position position="406"/>
    </location>
</feature>
<feature type="mutagenesis site" description="Reduces activity by 80%. No effect on inhibition by malonyl-coenzyme A." evidence="5">
    <original>A</original>
    <variation>D</variation>
    <location>
        <position position="238"/>
    </location>
</feature>
<feature type="mutagenesis site" description="Loss of activity." evidence="5">
    <original>H</original>
    <variation>A</variation>
    <location>
        <position position="327"/>
    </location>
</feature>
<feature type="mutagenesis site" description="Lowers activity towards medium and long chain fatty acids. Increases activity towards short chain fatty acids." evidence="6">
    <original>G</original>
    <variation>M</variation>
    <location>
        <position position="553"/>
    </location>
</feature>
<feature type="sequence conflict" description="In Ref. 2; AAA40948." evidence="7" ref="2">
    <original>L</original>
    <variation>F</variation>
    <location>
        <position position="334"/>
    </location>
</feature>
<feature type="sequence conflict" description="In Ref. 2; AAA40948." evidence="7" ref="2">
    <original>VR</original>
    <variation>RQ</variation>
    <location>
        <begin position="463"/>
        <end position="464"/>
    </location>
</feature>
<reference key="1">
    <citation type="journal article" date="1995" name="Biochim. Biophys. Acta">
        <title>Molecular cloning and sequence analysis of the rat liver carnitine octanoyltransferase cDNA, its natural gene and the gene promoter.</title>
        <authorList>
            <person name="Choi S.J."/>
            <person name="Oh D.H."/>
            <person name="Song C.S."/>
            <person name="Roy A.K."/>
            <person name="Chatterjee B."/>
        </authorList>
    </citation>
    <scope>NUCLEOTIDE SEQUENCE [MRNA]</scope>
    <source>
        <strain>Sprague-Dawley</strain>
        <tissue>Liver</tissue>
    </source>
</reference>
<reference key="2">
    <citation type="journal article" date="1988" name="Biochemistry">
        <title>Cloning, sequencing, and regulation of rat liver carnitine octanoyltransferase: transcriptional stimulation of the enzyme during peroxisome proliferation.</title>
        <authorList>
            <person name="Chatterjee B."/>
            <person name="Song C.S."/>
            <person name="Kim J.-M."/>
            <person name="Roy A.K."/>
        </authorList>
    </citation>
    <scope>NUCLEOTIDE SEQUENCE [MRNA] OF 1-547</scope>
    <source>
        <tissue>Liver</tissue>
    </source>
</reference>
<reference key="3">
    <citation type="journal article" date="2001" name="J. Biol. Chem.">
        <title>Structural model of the catalytic core of carnitine palmitoyltransferase I and carnitine octanoyltransferase (COT): mutation of CPT I histidine 473 and alanine 381 and COT alanine 238 impairs the catalytic activity.</title>
        <authorList>
            <person name="Morillas M."/>
            <person name="Gomez-Puertas P."/>
            <person name="Roca R."/>
            <person name="Serra D."/>
            <person name="Asins G."/>
            <person name="Valencia A."/>
            <person name="Hegardt F.G."/>
        </authorList>
    </citation>
    <scope>MUTAGENESIS OF ALA-238 AND HIS-327</scope>
    <scope>3D-STRUCTURE MODELING</scope>
</reference>
<reference key="4">
    <citation type="journal article" date="2004" name="J. Biol. Chem.">
        <title>Redesign of carnitine acetyltransferase specificity by protein engineering.</title>
        <authorList>
            <person name="Cordente A.G."/>
            <person name="Lopez-Vinas E."/>
            <person name="Vazquez M.I."/>
            <person name="Swiegers J.H."/>
            <person name="Pretorius I.S."/>
            <person name="Gomez-Puertas P."/>
            <person name="Hegardt F.G."/>
            <person name="Asins G."/>
            <person name="Serra D."/>
        </authorList>
    </citation>
    <scope>MUTAGENESIS OF GLY-553</scope>
    <scope>3D-STRUCTURE MODELING</scope>
</reference>
<dbReference type="EC" id="2.3.1.137" evidence="3"/>
<dbReference type="EMBL" id="U26033">
    <property type="protein sequence ID" value="AAC52317.1"/>
    <property type="molecule type" value="mRNA"/>
</dbReference>
<dbReference type="EMBL" id="J02844">
    <property type="protein sequence ID" value="AAA40948.1"/>
    <property type="status" value="ALT_SEQ"/>
    <property type="molecule type" value="mRNA"/>
</dbReference>
<dbReference type="PIR" id="A31948">
    <property type="entry name" value="A31948"/>
</dbReference>
<dbReference type="PIR" id="S60025">
    <property type="entry name" value="S60025"/>
</dbReference>
<dbReference type="RefSeq" id="NP_114193.1">
    <property type="nucleotide sequence ID" value="NM_031987.1"/>
</dbReference>
<dbReference type="SMR" id="P11466"/>
<dbReference type="FunCoup" id="P11466">
    <property type="interactions" value="1451"/>
</dbReference>
<dbReference type="IntAct" id="P11466">
    <property type="interactions" value="4"/>
</dbReference>
<dbReference type="STRING" id="10116.ENSRNOP00000073847"/>
<dbReference type="iPTMnet" id="P11466"/>
<dbReference type="PhosphoSitePlus" id="P11466"/>
<dbReference type="PaxDb" id="10116-ENSRNOP00000063856"/>
<dbReference type="GeneID" id="83842"/>
<dbReference type="KEGG" id="rno:83842"/>
<dbReference type="AGR" id="RGD:70908"/>
<dbReference type="CTD" id="54677"/>
<dbReference type="RGD" id="70908">
    <property type="gene designation" value="Crot"/>
</dbReference>
<dbReference type="eggNOG" id="KOG3718">
    <property type="taxonomic scope" value="Eukaryota"/>
</dbReference>
<dbReference type="InParanoid" id="P11466"/>
<dbReference type="OrthoDB" id="240216at2759"/>
<dbReference type="PhylomeDB" id="P11466"/>
<dbReference type="BRENDA" id="2.3.1.137">
    <property type="organism ID" value="5301"/>
</dbReference>
<dbReference type="Reactome" id="R-RNO-389887">
    <property type="pathway name" value="Beta-oxidation of pristanoyl-CoA"/>
</dbReference>
<dbReference type="Reactome" id="R-RNO-9033241">
    <property type="pathway name" value="Peroxisomal protein import"/>
</dbReference>
<dbReference type="UniPathway" id="UPA00659"/>
<dbReference type="PRO" id="PR:P11466"/>
<dbReference type="Proteomes" id="UP000002494">
    <property type="component" value="Unplaced"/>
</dbReference>
<dbReference type="GO" id="GO:0005777">
    <property type="term" value="C:peroxisome"/>
    <property type="evidence" value="ECO:0000314"/>
    <property type="project" value="RGD"/>
</dbReference>
<dbReference type="GO" id="GO:0008458">
    <property type="term" value="F:carnitine O-octanoyltransferase activity"/>
    <property type="evidence" value="ECO:0000314"/>
    <property type="project" value="RGD"/>
</dbReference>
<dbReference type="GO" id="GO:0009437">
    <property type="term" value="P:carnitine metabolic process"/>
    <property type="evidence" value="ECO:0000250"/>
    <property type="project" value="UniProtKB"/>
</dbReference>
<dbReference type="GO" id="GO:0071874">
    <property type="term" value="P:cellular response to norepinephrine stimulus"/>
    <property type="evidence" value="ECO:0007007"/>
    <property type="project" value="RGD"/>
</dbReference>
<dbReference type="GO" id="GO:0015936">
    <property type="term" value="P:coenzyme A metabolic process"/>
    <property type="evidence" value="ECO:0000250"/>
    <property type="project" value="UniProtKB"/>
</dbReference>
<dbReference type="GO" id="GO:0006635">
    <property type="term" value="P:fatty acid beta-oxidation"/>
    <property type="evidence" value="ECO:0000266"/>
    <property type="project" value="RGD"/>
</dbReference>
<dbReference type="GO" id="GO:0006631">
    <property type="term" value="P:fatty acid metabolic process"/>
    <property type="evidence" value="ECO:0000250"/>
    <property type="project" value="UniProtKB"/>
</dbReference>
<dbReference type="GO" id="GO:0015908">
    <property type="term" value="P:fatty acid transport"/>
    <property type="evidence" value="ECO:0000266"/>
    <property type="project" value="RGD"/>
</dbReference>
<dbReference type="GO" id="GO:0006091">
    <property type="term" value="P:generation of precursor metabolites and energy"/>
    <property type="evidence" value="ECO:0000250"/>
    <property type="project" value="UniProtKB"/>
</dbReference>
<dbReference type="GO" id="GO:0015909">
    <property type="term" value="P:long-chain fatty acid transport"/>
    <property type="evidence" value="ECO:0000304"/>
    <property type="project" value="RGD"/>
</dbReference>
<dbReference type="GO" id="GO:0051791">
    <property type="term" value="P:medium-chain fatty acid metabolic process"/>
    <property type="evidence" value="ECO:0000250"/>
    <property type="project" value="UniProtKB"/>
</dbReference>
<dbReference type="GO" id="GO:0001579">
    <property type="term" value="P:medium-chain fatty acid transport"/>
    <property type="evidence" value="ECO:0000304"/>
    <property type="project" value="RGD"/>
</dbReference>
<dbReference type="GO" id="GO:0009410">
    <property type="term" value="P:response to xenobiotic stimulus"/>
    <property type="evidence" value="ECO:0000314"/>
    <property type="project" value="RGD"/>
</dbReference>
<dbReference type="FunFam" id="3.30.559.70:FF:000006">
    <property type="entry name" value="Peroxisomal carnitine O-octanoyltransferase"/>
    <property type="match status" value="1"/>
</dbReference>
<dbReference type="Gene3D" id="3.30.559.10">
    <property type="entry name" value="Chloramphenicol acetyltransferase-like domain"/>
    <property type="match status" value="1"/>
</dbReference>
<dbReference type="Gene3D" id="1.10.275.20">
    <property type="entry name" value="Choline/Carnitine o-acyltransferase"/>
    <property type="match status" value="1"/>
</dbReference>
<dbReference type="Gene3D" id="3.30.559.70">
    <property type="entry name" value="Choline/Carnitine o-acyltransferase, domain 2"/>
    <property type="match status" value="1"/>
</dbReference>
<dbReference type="InterPro" id="IPR000542">
    <property type="entry name" value="Carn_acyl_trans"/>
</dbReference>
<dbReference type="InterPro" id="IPR042572">
    <property type="entry name" value="Carn_acyl_trans_N"/>
</dbReference>
<dbReference type="InterPro" id="IPR023213">
    <property type="entry name" value="CAT-like_dom_sf"/>
</dbReference>
<dbReference type="InterPro" id="IPR039551">
    <property type="entry name" value="Cho/carn_acyl_trans"/>
</dbReference>
<dbReference type="InterPro" id="IPR042231">
    <property type="entry name" value="Cho/carn_acyl_trans_2"/>
</dbReference>
<dbReference type="PANTHER" id="PTHR22589">
    <property type="entry name" value="CARNITINE O-ACYLTRANSFERASE"/>
    <property type="match status" value="1"/>
</dbReference>
<dbReference type="PANTHER" id="PTHR22589:SF67">
    <property type="entry name" value="PEROXISOMAL CARNITINE O-OCTANOYLTRANSFERASE"/>
    <property type="match status" value="1"/>
</dbReference>
<dbReference type="Pfam" id="PF00755">
    <property type="entry name" value="Carn_acyltransf"/>
    <property type="match status" value="1"/>
</dbReference>
<dbReference type="SUPFAM" id="SSF52777">
    <property type="entry name" value="CoA-dependent acyltransferases"/>
    <property type="match status" value="2"/>
</dbReference>
<dbReference type="PROSITE" id="PS00439">
    <property type="entry name" value="ACYLTRANSF_C_1"/>
    <property type="match status" value="1"/>
</dbReference>
<dbReference type="PROSITE" id="PS00440">
    <property type="entry name" value="ACYLTRANSF_C_2"/>
    <property type="match status" value="1"/>
</dbReference>
<sequence>MENQLAKSIEERTFQYQDSLPPLPVPSLEESLKKYLESVKPFANEDEYKKTEEIVQKFQDGVGKTLHQKLLERAKGKRNWLEEWWLNVAYLDVRIPSQLNVNFVGPSPHFEHYWPAREGTQLERGSILLWHNLNYWQLLRREKLPVHKSGNTPLDMNQFRMLFSTCKVPGITRDSIMNYFKTESEGHCPTHIAVLCRGRAFVFDVLHDGCLITPPELLRQLTYIYQKCWNEPVGPSIAALTSEERTRWAKAREYLIGLDPENLTLLEKIQSSLFVYSIEDTSPHATPENFSQVFEMLLGGDPAVRWGDKSYNLISFANGIFGCSCDHAPYDAMLMVNIAHYVDEKLLETEGRWKGSEKVRDIPLPEELAFTVDEKILNDVYQAKAQHLKAASDLQIAASTFTSFGKKLTKKEALHPDTFIQLALQLAYYRLHGRPGCCYETAMTRYFYHGRTETVRSCTVEAVRWCQSMQDPSASLLERQQKMLDAFAKHNKMMRDCSHGKGFDRHLLGLLLIAKEEGLPVPELFEDPLFSRSGGGGNFVLSTSLVGYLRIQGVVVPMVHNGYGFFYHIRDDRFVVTCSSWRSCLETDAEKLVEMIFHAFHDMIHLMNTAHL</sequence>
<protein>
    <recommendedName>
        <fullName>Peroxisomal carnitine O-octanoyltransferase</fullName>
        <shortName>COT</shortName>
        <ecNumber evidence="3">2.3.1.137</ecNumber>
    </recommendedName>
</protein>
<keyword id="KW-0007">Acetylation</keyword>
<keyword id="KW-0012">Acyltransferase</keyword>
<keyword id="KW-0276">Fatty acid metabolism</keyword>
<keyword id="KW-0443">Lipid metabolism</keyword>
<keyword id="KW-0576">Peroxisome</keyword>
<keyword id="KW-1185">Reference proteome</keyword>
<keyword id="KW-0808">Transferase</keyword>
<keyword id="KW-0813">Transport</keyword>
<comment type="function">
    <text evidence="3">Beta-oxidation of fatty acids. The highest activity concerns the C6 to C10 chain length substrate.</text>
</comment>
<comment type="catalytic activity">
    <reaction evidence="3">
        <text>octanoyl-CoA + (R)-carnitine = O-octanoyl-(R)-carnitine + CoA</text>
        <dbReference type="Rhea" id="RHEA:17177"/>
        <dbReference type="ChEBI" id="CHEBI:16347"/>
        <dbReference type="ChEBI" id="CHEBI:18102"/>
        <dbReference type="ChEBI" id="CHEBI:57287"/>
        <dbReference type="ChEBI" id="CHEBI:57386"/>
        <dbReference type="EC" id="2.3.1.137"/>
    </reaction>
</comment>
<comment type="catalytic activity">
    <reaction evidence="3">
        <text>4,8-dimethylnonanoyl-CoA + (R)-carnitine = O-4,8-dimethylnonanoyl-(R)-carnitine + CoA</text>
        <dbReference type="Rhea" id="RHEA:44860"/>
        <dbReference type="ChEBI" id="CHEBI:16347"/>
        <dbReference type="ChEBI" id="CHEBI:57287"/>
        <dbReference type="ChEBI" id="CHEBI:77061"/>
        <dbReference type="ChEBI" id="CHEBI:84654"/>
    </reaction>
</comment>
<comment type="pathway">
    <text>Lipid metabolism; fatty acid beta-oxidation.</text>
</comment>
<comment type="subcellular location">
    <subcellularLocation>
        <location evidence="7">Peroxisome</location>
    </subcellularLocation>
</comment>
<comment type="tissue specificity">
    <text>Liver.</text>
</comment>
<comment type="similarity">
    <text evidence="7">Belongs to the carnitine/choline acetyltransferase family.</text>
</comment>
<comment type="sequence caution" evidence="7">
    <conflict type="frameshift">
        <sequence resource="EMBL-CDS" id="AAA40948"/>
    </conflict>
</comment>
<comment type="sequence caution" evidence="7">
    <conflict type="miscellaneous discrepancy">
        <sequence resource="EMBL-CDS" id="AAA40948"/>
    </conflict>
</comment>